<sequence length="822" mass="94206">MGNMRRLLIFAVLVILTVISNSKSSYKYDGSLFSSKELDYDETDTKAMGSVFSRYMSDSDAQLILDLDFFRHFFNYAEAYRDGAEEGNLELMKYAVEMVEKLKSFDISMACVGDMMHLAWTGVEYATHVEEHKNCSDCKCTPLFQQKKSERHWIFNVFDAMGKVPAGIMSGNNLWVGSWSTCRKIDVVKNAQGQKWKGQYCLATIDAYERDNPLVYFGNMMSGPPDKHCYDKTVKNVTDDGFCFALFPVLKFGVCMPNTCTNHDVKQMLSFAIRATEGAVGTKSVCNVDVECRAESYSDAMSENGLAMFALYLLIATVVLVTFGTLYDLFIVSKAPQDEKNSSAFNHPFIKFILAFSMYTNGSEILQSKKNDREINSLHGVRFLSMCWIILGHTYYYIGTSLTTDNLVPTLINFPKQFHTQIIVQAPLAVDSFFFLSGMLAAFSFFKKTMKADPNHPPKLSAFNWQTWPMYYYKRYIRITPTYIIVMLFDVTLFTYISNGPFWRPIERQGCSIAWWTNLIYLNNFLLQDQECCMGWTWYLANDMQFHIFLMPLLVIVFLKWGMKVGLGLSTGLIALSSLIRLIITQIYGYPPAPILTAKLQIVYQLNDYWNDVYVRPYIRCTPFIVGIVVAYLLNAWTTREQKDLKIKLERRTVIICWCTSTVLGLYSVFGLYWFAKTGDISKPWEILYTIFGTPAYALALGWVVFACTTGNGGPVDTILSWRLFVPLSKITFCAYLLHPIMLQIYNLSRPQPFHFTTFIQMIRYTVEAVFASYTIAFFFSLAFEKPLNKIDEMLFNSKKMMNGENGNTTEMVPLNKIRNSD</sequence>
<reference key="1">
    <citation type="journal article" date="1999" name="Mol. Cell">
        <title>Fluoxetine-resistant mutants in C. elegans define a novel family of transmembrane proteins.</title>
        <authorList>
            <person name="Choy R.K.M."/>
            <person name="Thomas J.H."/>
        </authorList>
    </citation>
    <scope>NUCLEOTIDE SEQUENCE [MRNA]</scope>
    <scope>FUNCTION</scope>
    <scope>TISSUE SPECIFICITY</scope>
    <scope>DISRUPTION PHENOTYPE</scope>
    <scope>MUTAGENESIS OF PRO-787</scope>
    <source>
        <strain>Bristol N2</strain>
    </source>
</reference>
<reference key="2">
    <citation type="journal article" date="1998" name="Science">
        <title>Genome sequence of the nematode C. elegans: a platform for investigating biology.</title>
        <authorList>
            <consortium name="The C. elegans sequencing consortium"/>
        </authorList>
    </citation>
    <scope>NUCLEOTIDE SEQUENCE [LARGE SCALE GENOMIC DNA]</scope>
    <source>
        <strain>Bristol N2</strain>
    </source>
</reference>
<reference key="3">
    <citation type="journal article" date="2006" name="Dev. Biol.">
        <title>Dietary manipulation implicates lipid signaling in the regulation of germ cell maintenance in C. elegans.</title>
        <authorList>
            <person name="Watts J.L."/>
            <person name="Browse J."/>
        </authorList>
    </citation>
    <scope>FUNCTION</scope>
    <scope>DISRUPTION PHENOTYPE</scope>
</reference>
<reference key="4">
    <citation type="journal article" date="2006" name="Genetics">
        <title>Fluoxetine-resistance genes in Caenorhabditis elegans function in the intestine and may act in drug transport.</title>
        <authorList>
            <person name="Choy R.K."/>
            <person name="Kemner J.M."/>
            <person name="Thomas J.H."/>
        </authorList>
    </citation>
    <scope>FUNCTION</scope>
    <scope>DISRUPTION PHENOTYPE</scope>
</reference>
<reference key="5">
    <citation type="journal article" date="2007" name="Mol. Cell. Proteomics">
        <title>Proteomics reveals N-linked glycoprotein diversity in Caenorhabditis elegans and suggests an atypical translocation mechanism for integral membrane proteins.</title>
        <authorList>
            <person name="Kaji H."/>
            <person name="Kamiie J."/>
            <person name="Kawakami H."/>
            <person name="Kido K."/>
            <person name="Yamauchi Y."/>
            <person name="Shinkawa T."/>
            <person name="Taoka M."/>
            <person name="Takahashi N."/>
            <person name="Isobe T."/>
        </authorList>
    </citation>
    <scope>GLYCOSYLATION [LARGE SCALE ANALYSIS] AT ASN-236</scope>
    <scope>IDENTIFICATION BY MASS SPECTROMETRY</scope>
    <source>
        <strain>Bristol N2</strain>
    </source>
</reference>
<comment type="function">
    <text evidence="2 3 4">Plays a role in the uptake of a range of molecules including lipids and xenobiotic compounds from the intestine to surrounding tissues. Mediates transport of lipids from intestine to the reproductive tract. Required for efficient yolk transport into oocytes. Vital for embryonic development.</text>
</comment>
<comment type="subcellular location">
    <subcellularLocation>
        <location evidence="6">Membrane</location>
        <topology evidence="6">Multi-pass membrane protein</topology>
    </subcellularLocation>
</comment>
<comment type="tissue specificity">
    <text evidence="2">In L1 larvae through to adult, hyp3 and hyp5, the most anterior cells in the hypodermis, and in intestine. Other hypodermal cells show weaker expression.</text>
</comment>
<comment type="disruption phenotype">
    <text evidence="2 3 4">Increased resistance to fluoxetine-induced nose muscle contraction. Slow development, embryonic lethality and defective yolk transport to the oocytes leading to accumulation of yolk granules in the pseudocoelomic fluid and appearance of pale eggs. Reduced level of sensitivity to dihomo-gamma-linolenic acid-induced sterility.</text>
</comment>
<comment type="similarity">
    <text evidence="6">Belongs to the acyltransferase 3 family.</text>
</comment>
<proteinExistence type="evidence at protein level"/>
<accession>Q09225</accession>
<accession>Q9U4I8</accession>
<evidence type="ECO:0000255" key="1"/>
<evidence type="ECO:0000269" key="2">
    <source>
    </source>
</evidence>
<evidence type="ECO:0000269" key="3">
    <source>
    </source>
</evidence>
<evidence type="ECO:0000269" key="4">
    <source>
    </source>
</evidence>
<evidence type="ECO:0000269" key="5">
    <source>
    </source>
</evidence>
<evidence type="ECO:0000305" key="6"/>
<name>NRF6_CAEEL</name>
<keyword id="KW-0217">Developmental protein</keyword>
<keyword id="KW-0325">Glycoprotein</keyword>
<keyword id="KW-0445">Lipid transport</keyword>
<keyword id="KW-0446">Lipid-binding</keyword>
<keyword id="KW-0472">Membrane</keyword>
<keyword id="KW-1185">Reference proteome</keyword>
<keyword id="KW-0732">Signal</keyword>
<keyword id="KW-0812">Transmembrane</keyword>
<keyword id="KW-1133">Transmembrane helix</keyword>
<keyword id="KW-0813">Transport</keyword>
<dbReference type="EMBL" id="AF173372">
    <property type="protein sequence ID" value="AAD51972.1"/>
    <property type="molecule type" value="mRNA"/>
</dbReference>
<dbReference type="EMBL" id="Z46676">
    <property type="protein sequence ID" value="CAA86669.2"/>
    <property type="molecule type" value="Genomic_DNA"/>
</dbReference>
<dbReference type="PIR" id="T19074">
    <property type="entry name" value="T19074"/>
</dbReference>
<dbReference type="RefSeq" id="NP_495680.1">
    <property type="nucleotide sequence ID" value="NM_063279.6"/>
</dbReference>
<dbReference type="BioGRID" id="39619">
    <property type="interactions" value="1"/>
</dbReference>
<dbReference type="FunCoup" id="Q09225">
    <property type="interactions" value="24"/>
</dbReference>
<dbReference type="STRING" id="6239.C08B11.4.1"/>
<dbReference type="TCDB" id="9.B.97.2.3">
    <property type="family name" value="the acyltransferase-3/putative acetyl-coa transporter (atat) family"/>
</dbReference>
<dbReference type="GlyCosmos" id="Q09225">
    <property type="glycosylation" value="1 site, No reported glycans"/>
</dbReference>
<dbReference type="iPTMnet" id="Q09225"/>
<dbReference type="PaxDb" id="6239-C08B11.4"/>
<dbReference type="PeptideAtlas" id="Q09225"/>
<dbReference type="EnsemblMetazoa" id="C08B11.4.1">
    <property type="protein sequence ID" value="C08B11.4.1"/>
    <property type="gene ID" value="WBGene00003813"/>
</dbReference>
<dbReference type="GeneID" id="174287"/>
<dbReference type="KEGG" id="cel:CELE_C08B11.4"/>
<dbReference type="UCSC" id="C08B11.4">
    <property type="organism name" value="c. elegans"/>
</dbReference>
<dbReference type="AGR" id="WB:WBGene00003813"/>
<dbReference type="CTD" id="174287"/>
<dbReference type="WormBase" id="C08B11.4">
    <property type="protein sequence ID" value="CE27798"/>
    <property type="gene ID" value="WBGene00003813"/>
    <property type="gene designation" value="nrf-6"/>
</dbReference>
<dbReference type="eggNOG" id="KOG3700">
    <property type="taxonomic scope" value="Eukaryota"/>
</dbReference>
<dbReference type="GeneTree" id="ENSGT00530000063340"/>
<dbReference type="HOGENOM" id="CLU_007874_3_2_1"/>
<dbReference type="InParanoid" id="Q09225"/>
<dbReference type="OMA" id="DIAYFLW"/>
<dbReference type="OrthoDB" id="118951at2759"/>
<dbReference type="PhylomeDB" id="Q09225"/>
<dbReference type="PRO" id="PR:Q09225"/>
<dbReference type="Proteomes" id="UP000001940">
    <property type="component" value="Chromosome II"/>
</dbReference>
<dbReference type="Bgee" id="WBGene00003813">
    <property type="expression patterns" value="Expressed in adult organism and 4 other cell types or tissues"/>
</dbReference>
<dbReference type="GO" id="GO:0016020">
    <property type="term" value="C:membrane"/>
    <property type="evidence" value="ECO:0007669"/>
    <property type="project" value="UniProtKB-SubCell"/>
</dbReference>
<dbReference type="GO" id="GO:0016747">
    <property type="term" value="F:acyltransferase activity, transferring groups other than amino-acyl groups"/>
    <property type="evidence" value="ECO:0007669"/>
    <property type="project" value="InterPro"/>
</dbReference>
<dbReference type="GO" id="GO:0008289">
    <property type="term" value="F:lipid binding"/>
    <property type="evidence" value="ECO:0007669"/>
    <property type="project" value="UniProtKB-KW"/>
</dbReference>
<dbReference type="GO" id="GO:0006869">
    <property type="term" value="P:lipid transport"/>
    <property type="evidence" value="ECO:0007669"/>
    <property type="project" value="UniProtKB-KW"/>
</dbReference>
<dbReference type="InterPro" id="IPR002656">
    <property type="entry name" value="Acyl_transf_3_dom"/>
</dbReference>
<dbReference type="InterPro" id="IPR006621">
    <property type="entry name" value="Nose-resist-to-fluoxetine_N"/>
</dbReference>
<dbReference type="InterPro" id="IPR052728">
    <property type="entry name" value="O2_lipid_transport_reg"/>
</dbReference>
<dbReference type="PANTHER" id="PTHR11161:SF65">
    <property type="entry name" value="NOSE RESISTANT TO FLUOXETINE PROTEIN 6"/>
    <property type="match status" value="1"/>
</dbReference>
<dbReference type="PANTHER" id="PTHR11161">
    <property type="entry name" value="O-ACYLTRANSFERASE"/>
    <property type="match status" value="1"/>
</dbReference>
<dbReference type="Pfam" id="PF01757">
    <property type="entry name" value="Acyl_transf_3"/>
    <property type="match status" value="1"/>
</dbReference>
<dbReference type="Pfam" id="PF20146">
    <property type="entry name" value="NRF"/>
    <property type="match status" value="1"/>
</dbReference>
<dbReference type="SMART" id="SM00703">
    <property type="entry name" value="NRF"/>
    <property type="match status" value="1"/>
</dbReference>
<protein>
    <recommendedName>
        <fullName>Nose resistant to fluoxetine protein 6</fullName>
        <shortName>Protein nrf-6</shortName>
    </recommendedName>
</protein>
<gene>
    <name type="primary">nrf-6</name>
    <name type="ORF">C08B11.4</name>
</gene>
<organism>
    <name type="scientific">Caenorhabditis elegans</name>
    <dbReference type="NCBI Taxonomy" id="6239"/>
    <lineage>
        <taxon>Eukaryota</taxon>
        <taxon>Metazoa</taxon>
        <taxon>Ecdysozoa</taxon>
        <taxon>Nematoda</taxon>
        <taxon>Chromadorea</taxon>
        <taxon>Rhabditida</taxon>
        <taxon>Rhabditina</taxon>
        <taxon>Rhabditomorpha</taxon>
        <taxon>Rhabditoidea</taxon>
        <taxon>Rhabditidae</taxon>
        <taxon>Peloderinae</taxon>
        <taxon>Caenorhabditis</taxon>
    </lineage>
</organism>
<feature type="signal peptide" evidence="1">
    <location>
        <begin position="1"/>
        <end position="24"/>
    </location>
</feature>
<feature type="chain" id="PRO_0000021856" description="Nose resistant to fluoxetine protein 6">
    <location>
        <begin position="25"/>
        <end position="822"/>
    </location>
</feature>
<feature type="transmembrane region" description="Helical" evidence="1">
    <location>
        <begin position="306"/>
        <end position="326"/>
    </location>
</feature>
<feature type="transmembrane region" description="Helical" evidence="1">
    <location>
        <begin position="617"/>
        <end position="637"/>
    </location>
</feature>
<feature type="transmembrane region" description="Helical" evidence="1">
    <location>
        <begin position="655"/>
        <end position="675"/>
    </location>
</feature>
<feature type="glycosylation site" description="N-linked (GlcNAc...) asparagine" evidence="5">
    <location>
        <position position="236"/>
    </location>
</feature>
<feature type="mutagenesis site" description="In allele nrg-6(SA526); fluoxetine induced nose contraction, pale eggs, yolk accumulation and embryonic lethality." evidence="2">
    <original>P</original>
    <variation>L</variation>
    <location>
        <position position="787"/>
    </location>
</feature>